<proteinExistence type="inferred from homology"/>
<name>Y2132_STAA3</name>
<reference key="1">
    <citation type="journal article" date="2006" name="Lancet">
        <title>Complete genome sequence of USA300, an epidemic clone of community-acquired meticillin-resistant Staphylococcus aureus.</title>
        <authorList>
            <person name="Diep B.A."/>
            <person name="Gill S.R."/>
            <person name="Chang R.F."/>
            <person name="Phan T.H."/>
            <person name="Chen J.H."/>
            <person name="Davidson M.G."/>
            <person name="Lin F."/>
            <person name="Lin J."/>
            <person name="Carleton H.A."/>
            <person name="Mongodin E.F."/>
            <person name="Sensabaugh G.F."/>
            <person name="Perdreau-Remington F."/>
        </authorList>
    </citation>
    <scope>NUCLEOTIDE SEQUENCE [LARGE SCALE GENOMIC DNA]</scope>
    <source>
        <strain>USA300</strain>
    </source>
</reference>
<comment type="similarity">
    <text evidence="1">Belongs to the UPF0457 family.</text>
</comment>
<gene>
    <name type="ordered locus">SAUSA300_2132</name>
</gene>
<accession>Q2FEV9</accession>
<sequence>MAMTVKKDNNEVRIQWRVADIKIPTSEIKNITQDQDIHAVPKLDSKDVSRIGSTFGKTNRVIIDTEDHEYIIYTQNDQKVYNELTK</sequence>
<organism>
    <name type="scientific">Staphylococcus aureus (strain USA300)</name>
    <dbReference type="NCBI Taxonomy" id="367830"/>
    <lineage>
        <taxon>Bacteria</taxon>
        <taxon>Bacillati</taxon>
        <taxon>Bacillota</taxon>
        <taxon>Bacilli</taxon>
        <taxon>Bacillales</taxon>
        <taxon>Staphylococcaceae</taxon>
        <taxon>Staphylococcus</taxon>
    </lineage>
</organism>
<dbReference type="EMBL" id="CP000255">
    <property type="protein sequence ID" value="ABD21025.1"/>
    <property type="molecule type" value="Genomic_DNA"/>
</dbReference>
<dbReference type="RefSeq" id="WP_001251935.1">
    <property type="nucleotide sequence ID" value="NZ_CP027476.1"/>
</dbReference>
<dbReference type="SMR" id="Q2FEV9"/>
<dbReference type="KEGG" id="saa:SAUSA300_2132"/>
<dbReference type="HOGENOM" id="CLU_174851_0_0_9"/>
<dbReference type="OMA" id="IIYTHND"/>
<dbReference type="Proteomes" id="UP000001939">
    <property type="component" value="Chromosome"/>
</dbReference>
<dbReference type="InterPro" id="IPR055365">
    <property type="entry name" value="PH_SunI-like"/>
</dbReference>
<dbReference type="Pfam" id="PF23491">
    <property type="entry name" value="bPH_8"/>
    <property type="match status" value="1"/>
</dbReference>
<evidence type="ECO:0000305" key="1"/>
<protein>
    <recommendedName>
        <fullName>UPF0457 protein SAUSA300_2132</fullName>
    </recommendedName>
</protein>
<feature type="chain" id="PRO_0000294505" description="UPF0457 protein SAUSA300_2132">
    <location>
        <begin position="1"/>
        <end position="86"/>
    </location>
</feature>